<dbReference type="EC" id="6.3.4.4" evidence="1"/>
<dbReference type="EMBL" id="AE016828">
    <property type="protein sequence ID" value="AAO90519.1"/>
    <property type="molecule type" value="Genomic_DNA"/>
</dbReference>
<dbReference type="RefSeq" id="NP_820005.1">
    <property type="nucleotide sequence ID" value="NC_002971.4"/>
</dbReference>
<dbReference type="RefSeq" id="WP_010957943.1">
    <property type="nucleotide sequence ID" value="NC_002971.4"/>
</dbReference>
<dbReference type="SMR" id="Q83CV4"/>
<dbReference type="STRING" id="227377.CBU_0998"/>
<dbReference type="DNASU" id="1208894"/>
<dbReference type="EnsemblBacteria" id="AAO90519">
    <property type="protein sequence ID" value="AAO90519"/>
    <property type="gene ID" value="CBU_0998"/>
</dbReference>
<dbReference type="GeneID" id="1208894"/>
<dbReference type="KEGG" id="cbu:CBU_0998"/>
<dbReference type="PATRIC" id="fig|227377.7.peg.991"/>
<dbReference type="eggNOG" id="COG0104">
    <property type="taxonomic scope" value="Bacteria"/>
</dbReference>
<dbReference type="HOGENOM" id="CLU_029848_0_0_6"/>
<dbReference type="OrthoDB" id="9807553at2"/>
<dbReference type="UniPathway" id="UPA00075">
    <property type="reaction ID" value="UER00335"/>
</dbReference>
<dbReference type="Proteomes" id="UP000002671">
    <property type="component" value="Chromosome"/>
</dbReference>
<dbReference type="GO" id="GO:0005737">
    <property type="term" value="C:cytoplasm"/>
    <property type="evidence" value="ECO:0000318"/>
    <property type="project" value="GO_Central"/>
</dbReference>
<dbReference type="GO" id="GO:0004019">
    <property type="term" value="F:adenylosuccinate synthase activity"/>
    <property type="evidence" value="ECO:0000318"/>
    <property type="project" value="GO_Central"/>
</dbReference>
<dbReference type="GO" id="GO:0005525">
    <property type="term" value="F:GTP binding"/>
    <property type="evidence" value="ECO:0007669"/>
    <property type="project" value="UniProtKB-UniRule"/>
</dbReference>
<dbReference type="GO" id="GO:0000287">
    <property type="term" value="F:magnesium ion binding"/>
    <property type="evidence" value="ECO:0007669"/>
    <property type="project" value="UniProtKB-UniRule"/>
</dbReference>
<dbReference type="GO" id="GO:0044208">
    <property type="term" value="P:'de novo' AMP biosynthetic process"/>
    <property type="evidence" value="ECO:0000318"/>
    <property type="project" value="GO_Central"/>
</dbReference>
<dbReference type="GO" id="GO:0046040">
    <property type="term" value="P:IMP metabolic process"/>
    <property type="evidence" value="ECO:0000318"/>
    <property type="project" value="GO_Central"/>
</dbReference>
<dbReference type="CDD" id="cd03108">
    <property type="entry name" value="AdSS"/>
    <property type="match status" value="1"/>
</dbReference>
<dbReference type="FunFam" id="1.10.300.10:FF:000001">
    <property type="entry name" value="Adenylosuccinate synthetase"/>
    <property type="match status" value="1"/>
</dbReference>
<dbReference type="FunFam" id="3.90.170.10:FF:000001">
    <property type="entry name" value="Adenylosuccinate synthetase"/>
    <property type="match status" value="1"/>
</dbReference>
<dbReference type="Gene3D" id="3.40.440.10">
    <property type="entry name" value="Adenylosuccinate Synthetase, subunit A, domain 1"/>
    <property type="match status" value="1"/>
</dbReference>
<dbReference type="Gene3D" id="1.10.300.10">
    <property type="entry name" value="Adenylosuccinate Synthetase, subunit A, domain 2"/>
    <property type="match status" value="1"/>
</dbReference>
<dbReference type="Gene3D" id="3.90.170.10">
    <property type="entry name" value="Adenylosuccinate Synthetase, subunit A, domain 3"/>
    <property type="match status" value="1"/>
</dbReference>
<dbReference type="HAMAP" id="MF_00011">
    <property type="entry name" value="Adenylosucc_synth"/>
    <property type="match status" value="1"/>
</dbReference>
<dbReference type="InterPro" id="IPR018220">
    <property type="entry name" value="Adenylosuccin_syn_GTP-bd"/>
</dbReference>
<dbReference type="InterPro" id="IPR033128">
    <property type="entry name" value="Adenylosuccin_syn_Lys_AS"/>
</dbReference>
<dbReference type="InterPro" id="IPR042109">
    <property type="entry name" value="Adenylosuccinate_synth_dom1"/>
</dbReference>
<dbReference type="InterPro" id="IPR042110">
    <property type="entry name" value="Adenylosuccinate_synth_dom2"/>
</dbReference>
<dbReference type="InterPro" id="IPR042111">
    <property type="entry name" value="Adenylosuccinate_synth_dom3"/>
</dbReference>
<dbReference type="InterPro" id="IPR001114">
    <property type="entry name" value="Adenylosuccinate_synthetase"/>
</dbReference>
<dbReference type="InterPro" id="IPR027417">
    <property type="entry name" value="P-loop_NTPase"/>
</dbReference>
<dbReference type="NCBIfam" id="NF002223">
    <property type="entry name" value="PRK01117.1"/>
    <property type="match status" value="1"/>
</dbReference>
<dbReference type="NCBIfam" id="TIGR00184">
    <property type="entry name" value="purA"/>
    <property type="match status" value="1"/>
</dbReference>
<dbReference type="PANTHER" id="PTHR11846">
    <property type="entry name" value="ADENYLOSUCCINATE SYNTHETASE"/>
    <property type="match status" value="1"/>
</dbReference>
<dbReference type="PANTHER" id="PTHR11846:SF0">
    <property type="entry name" value="ADENYLOSUCCINATE SYNTHETASE"/>
    <property type="match status" value="1"/>
</dbReference>
<dbReference type="Pfam" id="PF00709">
    <property type="entry name" value="Adenylsucc_synt"/>
    <property type="match status" value="1"/>
</dbReference>
<dbReference type="SMART" id="SM00788">
    <property type="entry name" value="Adenylsucc_synt"/>
    <property type="match status" value="1"/>
</dbReference>
<dbReference type="SUPFAM" id="SSF52540">
    <property type="entry name" value="P-loop containing nucleoside triphosphate hydrolases"/>
    <property type="match status" value="1"/>
</dbReference>
<dbReference type="PROSITE" id="PS01266">
    <property type="entry name" value="ADENYLOSUCCIN_SYN_1"/>
    <property type="match status" value="1"/>
</dbReference>
<dbReference type="PROSITE" id="PS00513">
    <property type="entry name" value="ADENYLOSUCCIN_SYN_2"/>
    <property type="match status" value="1"/>
</dbReference>
<name>PURA_COXBU</name>
<reference key="1">
    <citation type="journal article" date="2003" name="Proc. Natl. Acad. Sci. U.S.A.">
        <title>Complete genome sequence of the Q-fever pathogen, Coxiella burnetii.</title>
        <authorList>
            <person name="Seshadri R."/>
            <person name="Paulsen I.T."/>
            <person name="Eisen J.A."/>
            <person name="Read T.D."/>
            <person name="Nelson K.E."/>
            <person name="Nelson W.C."/>
            <person name="Ward N.L."/>
            <person name="Tettelin H."/>
            <person name="Davidsen T.M."/>
            <person name="Beanan M.J."/>
            <person name="DeBoy R.T."/>
            <person name="Daugherty S.C."/>
            <person name="Brinkac L.M."/>
            <person name="Madupu R."/>
            <person name="Dodson R.J."/>
            <person name="Khouri H.M."/>
            <person name="Lee K.H."/>
            <person name="Carty H.A."/>
            <person name="Scanlan D."/>
            <person name="Heinzen R.A."/>
            <person name="Thompson H.A."/>
            <person name="Samuel J.E."/>
            <person name="Fraser C.M."/>
            <person name="Heidelberg J.F."/>
        </authorList>
    </citation>
    <scope>NUCLEOTIDE SEQUENCE [LARGE SCALE GENOMIC DNA]</scope>
    <source>
        <strain>RSA 493 / Nine Mile phase I</strain>
    </source>
</reference>
<organism>
    <name type="scientific">Coxiella burnetii (strain RSA 493 / Nine Mile phase I)</name>
    <dbReference type="NCBI Taxonomy" id="227377"/>
    <lineage>
        <taxon>Bacteria</taxon>
        <taxon>Pseudomonadati</taxon>
        <taxon>Pseudomonadota</taxon>
        <taxon>Gammaproteobacteria</taxon>
        <taxon>Legionellales</taxon>
        <taxon>Coxiellaceae</taxon>
        <taxon>Coxiella</taxon>
    </lineage>
</organism>
<sequence>MNIVILGTQWGDEGKGKIVDMLTEDVAAVVRFQGGHNAGHTLIIDGEKTILRLIPSGILREGVLCLIGNGVVLSPPALMEEIEELNAKGIPVTEQLRISSACNLLLPYHVALDKAREAELGTKAIGTTGRGIGPAYEDKVARRGIRAMDLLHPDQLLEKIKKATAYHNIQLEHYYHQTPLDYQSIYNQLMEFREKIKPMIGDVSALLGNLRRQNKHIIFEGAQGSLLDIDLGTYPYVTSSNTTAGSAATGSGFGPLYFDRVLGITKAYVTRVGAGPFPTELTNEEGKKMAKRGNEFGSVTGRPRRCGWFDVISMRRTIQINSLTGIVLTKLDVLDEFAKIHLCTAYRCDGEVVNEPPFDQSLLESCEPVYEEMPGWQTSTYGLTDYSEMPKEARNYISRLEELLGVPITIISTGPDRKHTIVRQAVFNQVITAKG</sequence>
<gene>
    <name evidence="1" type="primary">purA</name>
    <name type="ordered locus">CBU_0998</name>
</gene>
<evidence type="ECO:0000255" key="1">
    <source>
        <dbReference type="HAMAP-Rule" id="MF_00011"/>
    </source>
</evidence>
<comment type="function">
    <text evidence="1">Plays an important role in the de novo pathway of purine nucleotide biosynthesis. Catalyzes the first committed step in the biosynthesis of AMP from IMP.</text>
</comment>
<comment type="catalytic activity">
    <reaction evidence="1">
        <text>IMP + L-aspartate + GTP = N(6)-(1,2-dicarboxyethyl)-AMP + GDP + phosphate + 2 H(+)</text>
        <dbReference type="Rhea" id="RHEA:15753"/>
        <dbReference type="ChEBI" id="CHEBI:15378"/>
        <dbReference type="ChEBI" id="CHEBI:29991"/>
        <dbReference type="ChEBI" id="CHEBI:37565"/>
        <dbReference type="ChEBI" id="CHEBI:43474"/>
        <dbReference type="ChEBI" id="CHEBI:57567"/>
        <dbReference type="ChEBI" id="CHEBI:58053"/>
        <dbReference type="ChEBI" id="CHEBI:58189"/>
        <dbReference type="EC" id="6.3.4.4"/>
    </reaction>
</comment>
<comment type="cofactor">
    <cofactor evidence="1">
        <name>Mg(2+)</name>
        <dbReference type="ChEBI" id="CHEBI:18420"/>
    </cofactor>
    <text evidence="1">Binds 1 Mg(2+) ion per subunit.</text>
</comment>
<comment type="pathway">
    <text evidence="1">Purine metabolism; AMP biosynthesis via de novo pathway; AMP from IMP: step 1/2.</text>
</comment>
<comment type="subunit">
    <text evidence="1">Homodimer.</text>
</comment>
<comment type="subcellular location">
    <subcellularLocation>
        <location evidence="1">Cytoplasm</location>
    </subcellularLocation>
</comment>
<comment type="similarity">
    <text evidence="1">Belongs to the adenylosuccinate synthetase family.</text>
</comment>
<feature type="chain" id="PRO_0000095172" description="Adenylosuccinate synthetase">
    <location>
        <begin position="1"/>
        <end position="435"/>
    </location>
</feature>
<feature type="active site" description="Proton acceptor" evidence="1">
    <location>
        <position position="12"/>
    </location>
</feature>
<feature type="active site" description="Proton donor" evidence="1">
    <location>
        <position position="40"/>
    </location>
</feature>
<feature type="binding site" evidence="1">
    <location>
        <begin position="11"/>
        <end position="17"/>
    </location>
    <ligand>
        <name>GTP</name>
        <dbReference type="ChEBI" id="CHEBI:37565"/>
    </ligand>
</feature>
<feature type="binding site" description="in other chain" evidence="1">
    <location>
        <begin position="12"/>
        <end position="15"/>
    </location>
    <ligand>
        <name>IMP</name>
        <dbReference type="ChEBI" id="CHEBI:58053"/>
        <note>ligand shared between dimeric partners</note>
    </ligand>
</feature>
<feature type="binding site" evidence="1">
    <location>
        <position position="12"/>
    </location>
    <ligand>
        <name>Mg(2+)</name>
        <dbReference type="ChEBI" id="CHEBI:18420"/>
    </ligand>
</feature>
<feature type="binding site" description="in other chain" evidence="1">
    <location>
        <begin position="37"/>
        <end position="40"/>
    </location>
    <ligand>
        <name>IMP</name>
        <dbReference type="ChEBI" id="CHEBI:58053"/>
        <note>ligand shared between dimeric partners</note>
    </ligand>
</feature>
<feature type="binding site" evidence="1">
    <location>
        <begin position="39"/>
        <end position="41"/>
    </location>
    <ligand>
        <name>GTP</name>
        <dbReference type="ChEBI" id="CHEBI:37565"/>
    </ligand>
</feature>
<feature type="binding site" evidence="1">
    <location>
        <position position="39"/>
    </location>
    <ligand>
        <name>Mg(2+)</name>
        <dbReference type="ChEBI" id="CHEBI:18420"/>
    </ligand>
</feature>
<feature type="binding site" description="in other chain" evidence="1">
    <location>
        <position position="128"/>
    </location>
    <ligand>
        <name>IMP</name>
        <dbReference type="ChEBI" id="CHEBI:58053"/>
        <note>ligand shared between dimeric partners</note>
    </ligand>
</feature>
<feature type="binding site" evidence="1">
    <location>
        <position position="142"/>
    </location>
    <ligand>
        <name>IMP</name>
        <dbReference type="ChEBI" id="CHEBI:58053"/>
        <note>ligand shared between dimeric partners</note>
    </ligand>
</feature>
<feature type="binding site" description="in other chain" evidence="1">
    <location>
        <position position="223"/>
    </location>
    <ligand>
        <name>IMP</name>
        <dbReference type="ChEBI" id="CHEBI:58053"/>
        <note>ligand shared between dimeric partners</note>
    </ligand>
</feature>
<feature type="binding site" description="in other chain" evidence="1">
    <location>
        <position position="238"/>
    </location>
    <ligand>
        <name>IMP</name>
        <dbReference type="ChEBI" id="CHEBI:58053"/>
        <note>ligand shared between dimeric partners</note>
    </ligand>
</feature>
<feature type="binding site" evidence="1">
    <location>
        <begin position="298"/>
        <end position="304"/>
    </location>
    <ligand>
        <name>substrate</name>
    </ligand>
</feature>
<feature type="binding site" description="in other chain" evidence="1">
    <location>
        <position position="302"/>
    </location>
    <ligand>
        <name>IMP</name>
        <dbReference type="ChEBI" id="CHEBI:58053"/>
        <note>ligand shared between dimeric partners</note>
    </ligand>
</feature>
<feature type="binding site" evidence="1">
    <location>
        <position position="304"/>
    </location>
    <ligand>
        <name>GTP</name>
        <dbReference type="ChEBI" id="CHEBI:37565"/>
    </ligand>
</feature>
<feature type="binding site" evidence="1">
    <location>
        <begin position="330"/>
        <end position="332"/>
    </location>
    <ligand>
        <name>GTP</name>
        <dbReference type="ChEBI" id="CHEBI:37565"/>
    </ligand>
</feature>
<feature type="binding site" evidence="1">
    <location>
        <begin position="412"/>
        <end position="414"/>
    </location>
    <ligand>
        <name>GTP</name>
        <dbReference type="ChEBI" id="CHEBI:37565"/>
    </ligand>
</feature>
<proteinExistence type="inferred from homology"/>
<accession>Q83CV4</accession>
<protein>
    <recommendedName>
        <fullName evidence="1">Adenylosuccinate synthetase</fullName>
        <shortName evidence="1">AMPSase</shortName>
        <shortName evidence="1">AdSS</shortName>
        <ecNumber evidence="1">6.3.4.4</ecNumber>
    </recommendedName>
    <alternativeName>
        <fullName evidence="1">IMP--aspartate ligase</fullName>
    </alternativeName>
</protein>
<keyword id="KW-0963">Cytoplasm</keyword>
<keyword id="KW-0342">GTP-binding</keyword>
<keyword id="KW-0436">Ligase</keyword>
<keyword id="KW-0460">Magnesium</keyword>
<keyword id="KW-0479">Metal-binding</keyword>
<keyword id="KW-0547">Nucleotide-binding</keyword>
<keyword id="KW-0658">Purine biosynthesis</keyword>
<keyword id="KW-1185">Reference proteome</keyword>